<name>TBB3_SOYBN</name>
<organism>
    <name type="scientific">Glycine max</name>
    <name type="common">Soybean</name>
    <name type="synonym">Glycine hispida</name>
    <dbReference type="NCBI Taxonomy" id="3847"/>
    <lineage>
        <taxon>Eukaryota</taxon>
        <taxon>Viridiplantae</taxon>
        <taxon>Streptophyta</taxon>
        <taxon>Embryophyta</taxon>
        <taxon>Tracheophyta</taxon>
        <taxon>Spermatophyta</taxon>
        <taxon>Magnoliopsida</taxon>
        <taxon>eudicotyledons</taxon>
        <taxon>Gunneridae</taxon>
        <taxon>Pentapetalae</taxon>
        <taxon>rosids</taxon>
        <taxon>fabids</taxon>
        <taxon>Fabales</taxon>
        <taxon>Fabaceae</taxon>
        <taxon>Papilionoideae</taxon>
        <taxon>50 kb inversion clade</taxon>
        <taxon>NPAAA clade</taxon>
        <taxon>indigoferoid/millettioid clade</taxon>
        <taxon>Phaseoleae</taxon>
        <taxon>Glycine</taxon>
        <taxon>Glycine subgen. Soja</taxon>
    </lineage>
</organism>
<gene>
    <name type="primary">TUBB</name>
</gene>
<dbReference type="EMBL" id="X60216">
    <property type="protein sequence ID" value="CAA42777.1"/>
    <property type="molecule type" value="mRNA"/>
</dbReference>
<dbReference type="PIR" id="S17758">
    <property type="entry name" value="S17758"/>
</dbReference>
<dbReference type="SMR" id="P28551"/>
<dbReference type="STRING" id="3847.P28551"/>
<dbReference type="ProMEX" id="P28551"/>
<dbReference type="eggNOG" id="KOG1375">
    <property type="taxonomic scope" value="Eukaryota"/>
</dbReference>
<dbReference type="InParanoid" id="P28551"/>
<dbReference type="Proteomes" id="UP000008827">
    <property type="component" value="Unplaced"/>
</dbReference>
<dbReference type="GO" id="GO:0005737">
    <property type="term" value="C:cytoplasm"/>
    <property type="evidence" value="ECO:0000318"/>
    <property type="project" value="GO_Central"/>
</dbReference>
<dbReference type="GO" id="GO:0005874">
    <property type="term" value="C:microtubule"/>
    <property type="evidence" value="ECO:0000318"/>
    <property type="project" value="GO_Central"/>
</dbReference>
<dbReference type="GO" id="GO:0005525">
    <property type="term" value="F:GTP binding"/>
    <property type="evidence" value="ECO:0000318"/>
    <property type="project" value="GO_Central"/>
</dbReference>
<dbReference type="GO" id="GO:0003924">
    <property type="term" value="F:GTPase activity"/>
    <property type="evidence" value="ECO:0007669"/>
    <property type="project" value="InterPro"/>
</dbReference>
<dbReference type="GO" id="GO:0046872">
    <property type="term" value="F:metal ion binding"/>
    <property type="evidence" value="ECO:0007669"/>
    <property type="project" value="UniProtKB-KW"/>
</dbReference>
<dbReference type="GO" id="GO:0005200">
    <property type="term" value="F:structural constituent of cytoskeleton"/>
    <property type="evidence" value="ECO:0000318"/>
    <property type="project" value="GO_Central"/>
</dbReference>
<dbReference type="GO" id="GO:0000226">
    <property type="term" value="P:microtubule cytoskeleton organization"/>
    <property type="evidence" value="ECO:0000318"/>
    <property type="project" value="GO_Central"/>
</dbReference>
<dbReference type="GO" id="GO:0000278">
    <property type="term" value="P:mitotic cell cycle"/>
    <property type="evidence" value="ECO:0000318"/>
    <property type="project" value="GO_Central"/>
</dbReference>
<dbReference type="CDD" id="cd02187">
    <property type="entry name" value="beta_tubulin"/>
    <property type="match status" value="1"/>
</dbReference>
<dbReference type="FunFam" id="3.30.1330.20:FF:000002">
    <property type="entry name" value="Tubulin beta chain"/>
    <property type="match status" value="1"/>
</dbReference>
<dbReference type="FunFam" id="3.40.50.1440:FF:000005">
    <property type="entry name" value="Tubulin beta chain"/>
    <property type="match status" value="1"/>
</dbReference>
<dbReference type="Gene3D" id="1.10.287.600">
    <property type="entry name" value="Helix hairpin bin"/>
    <property type="match status" value="1"/>
</dbReference>
<dbReference type="Gene3D" id="3.30.1330.20">
    <property type="entry name" value="Tubulin/FtsZ, C-terminal domain"/>
    <property type="match status" value="1"/>
</dbReference>
<dbReference type="Gene3D" id="3.40.50.1440">
    <property type="entry name" value="Tubulin/FtsZ, GTPase domain"/>
    <property type="match status" value="1"/>
</dbReference>
<dbReference type="InterPro" id="IPR013838">
    <property type="entry name" value="Beta-tubulin_BS"/>
</dbReference>
<dbReference type="InterPro" id="IPR002453">
    <property type="entry name" value="Beta_tubulin"/>
</dbReference>
<dbReference type="InterPro" id="IPR008280">
    <property type="entry name" value="Tub_FtsZ_C"/>
</dbReference>
<dbReference type="InterPro" id="IPR000217">
    <property type="entry name" value="Tubulin"/>
</dbReference>
<dbReference type="InterPro" id="IPR037103">
    <property type="entry name" value="Tubulin/FtsZ-like_C"/>
</dbReference>
<dbReference type="InterPro" id="IPR018316">
    <property type="entry name" value="Tubulin/FtsZ_2-layer-sand-dom"/>
</dbReference>
<dbReference type="InterPro" id="IPR036525">
    <property type="entry name" value="Tubulin/FtsZ_GTPase_sf"/>
</dbReference>
<dbReference type="InterPro" id="IPR023123">
    <property type="entry name" value="Tubulin_C"/>
</dbReference>
<dbReference type="InterPro" id="IPR017975">
    <property type="entry name" value="Tubulin_CS"/>
</dbReference>
<dbReference type="InterPro" id="IPR003008">
    <property type="entry name" value="Tubulin_FtsZ_GTPase"/>
</dbReference>
<dbReference type="PANTHER" id="PTHR11588">
    <property type="entry name" value="TUBULIN"/>
    <property type="match status" value="1"/>
</dbReference>
<dbReference type="Pfam" id="PF00091">
    <property type="entry name" value="Tubulin"/>
    <property type="match status" value="1"/>
</dbReference>
<dbReference type="Pfam" id="PF03953">
    <property type="entry name" value="Tubulin_C"/>
    <property type="match status" value="1"/>
</dbReference>
<dbReference type="PRINTS" id="PR01163">
    <property type="entry name" value="BETATUBULIN"/>
</dbReference>
<dbReference type="PRINTS" id="PR01161">
    <property type="entry name" value="TUBULIN"/>
</dbReference>
<dbReference type="SMART" id="SM00864">
    <property type="entry name" value="Tubulin"/>
    <property type="match status" value="1"/>
</dbReference>
<dbReference type="SMART" id="SM00865">
    <property type="entry name" value="Tubulin_C"/>
    <property type="match status" value="1"/>
</dbReference>
<dbReference type="SUPFAM" id="SSF55307">
    <property type="entry name" value="Tubulin C-terminal domain-like"/>
    <property type="match status" value="1"/>
</dbReference>
<dbReference type="SUPFAM" id="SSF52490">
    <property type="entry name" value="Tubulin nucleotide-binding domain-like"/>
    <property type="match status" value="1"/>
</dbReference>
<dbReference type="PROSITE" id="PS00227">
    <property type="entry name" value="TUBULIN"/>
    <property type="match status" value="1"/>
</dbReference>
<dbReference type="PROSITE" id="PS00228">
    <property type="entry name" value="TUBULIN_B_AUTOREG"/>
    <property type="match status" value="1"/>
</dbReference>
<evidence type="ECO:0000250" key="1">
    <source>
        <dbReference type="UniProtKB" id="P68363"/>
    </source>
</evidence>
<evidence type="ECO:0000250" key="2">
    <source>
        <dbReference type="UniProtKB" id="Q13509"/>
    </source>
</evidence>
<evidence type="ECO:0000305" key="3"/>
<protein>
    <recommendedName>
        <fullName>Tubulin beta chain</fullName>
    </recommendedName>
    <alternativeName>
        <fullName>Beta-tubulin</fullName>
    </alternativeName>
</protein>
<proteinExistence type="evidence at transcript level"/>
<feature type="chain" id="PRO_0000048383" description="Tubulin beta chain">
    <location>
        <begin position="1"/>
        <end position="408" status="greater than"/>
    </location>
</feature>
<feature type="binding site" evidence="2">
    <location>
        <position position="11"/>
    </location>
    <ligand>
        <name>GTP</name>
        <dbReference type="ChEBI" id="CHEBI:37565"/>
    </ligand>
</feature>
<feature type="binding site" evidence="1">
    <location>
        <position position="69"/>
    </location>
    <ligand>
        <name>GTP</name>
        <dbReference type="ChEBI" id="CHEBI:37565"/>
    </ligand>
</feature>
<feature type="binding site" evidence="1">
    <location>
        <position position="69"/>
    </location>
    <ligand>
        <name>Mg(2+)</name>
        <dbReference type="ChEBI" id="CHEBI:18420"/>
    </ligand>
</feature>
<feature type="binding site" evidence="2">
    <location>
        <position position="138"/>
    </location>
    <ligand>
        <name>GTP</name>
        <dbReference type="ChEBI" id="CHEBI:37565"/>
    </ligand>
</feature>
<feature type="binding site" evidence="2">
    <location>
        <position position="142"/>
    </location>
    <ligand>
        <name>GTP</name>
        <dbReference type="ChEBI" id="CHEBI:37565"/>
    </ligand>
</feature>
<feature type="binding site" evidence="2">
    <location>
        <position position="143"/>
    </location>
    <ligand>
        <name>GTP</name>
        <dbReference type="ChEBI" id="CHEBI:37565"/>
    </ligand>
</feature>
<feature type="binding site" evidence="2">
    <location>
        <position position="144"/>
    </location>
    <ligand>
        <name>GTP</name>
        <dbReference type="ChEBI" id="CHEBI:37565"/>
    </ligand>
</feature>
<feature type="binding site" evidence="2">
    <location>
        <position position="204"/>
    </location>
    <ligand>
        <name>GTP</name>
        <dbReference type="ChEBI" id="CHEBI:37565"/>
    </ligand>
</feature>
<feature type="binding site" evidence="2">
    <location>
        <position position="226"/>
    </location>
    <ligand>
        <name>GTP</name>
        <dbReference type="ChEBI" id="CHEBI:37565"/>
    </ligand>
</feature>
<feature type="non-terminal residue">
    <location>
        <position position="408"/>
    </location>
</feature>
<keyword id="KW-0963">Cytoplasm</keyword>
<keyword id="KW-0206">Cytoskeleton</keyword>
<keyword id="KW-0342">GTP-binding</keyword>
<keyword id="KW-0460">Magnesium</keyword>
<keyword id="KW-0479">Metal-binding</keyword>
<keyword id="KW-0493">Microtubule</keyword>
<keyword id="KW-0547">Nucleotide-binding</keyword>
<keyword id="KW-1185">Reference proteome</keyword>
<accession>P28551</accession>
<comment type="function">
    <text>Tubulin is the major constituent of microtubules, a cylinder consisting of laterally associated linear protofilaments composed of alpha- and beta-tubulin heterodimers. Microtubules grow by the addition of GTP-tubulin dimers to the microtubule end, where a stabilizing cap forms. Below the cap, tubulin dimers are in GDP-bound state, owing to GTPase activity of alpha-tubulin.</text>
</comment>
<comment type="cofactor">
    <cofactor evidence="1">
        <name>Mg(2+)</name>
        <dbReference type="ChEBI" id="CHEBI:18420"/>
    </cofactor>
</comment>
<comment type="subunit">
    <text>Dimer of alpha and beta chains. A typical microtubule is a hollow water-filled tube with an outer diameter of 25 nm and an inner diameter of 15 nM. Alpha-beta heterodimers associate head-to-tail to form protofilaments running lengthwise along the microtubule wall with the beta-tubulin subunit facing the microtubule plus end conferring a structural polarity. Microtubules usually have 13 protofilaments but different protofilament numbers can be found in some organisms and specialized cells.</text>
</comment>
<comment type="subcellular location">
    <subcellularLocation>
        <location>Cytoplasm</location>
        <location>Cytoskeleton</location>
    </subcellularLocation>
</comment>
<comment type="induction">
    <text>Decreased in the hypocotyl zone of cell elongation by water deficit.</text>
</comment>
<comment type="similarity">
    <text evidence="3">Belongs to the tubulin family.</text>
</comment>
<reference key="1">
    <citation type="journal article" date="1991" name="Plant Mol. Biol.">
        <title>Water deficit modulates gene expression in growing zones of soybean seedlings. Analysis of differentially expressed cDNAs, a new beta-tubulin gene, and expression of genes encoding cell wall proteins.</title>
        <authorList>
            <person name="Creelman R.A."/>
            <person name="Mullet J.E."/>
        </authorList>
    </citation>
    <scope>NUCLEOTIDE SEQUENCE [MRNA]</scope>
    <source>
        <strain>cv. Williams 87</strain>
        <tissue>Seed</tissue>
    </source>
</reference>
<reference key="2">
    <citation type="submission" date="1993-07" db="EMBL/GenBank/DDBJ databases">
        <authorList>
            <person name="Creelman R.A."/>
        </authorList>
    </citation>
    <scope>SEQUENCE REVISION</scope>
</reference>
<sequence>MREILHIQGGQCGNQIGAKFWEVICDEHGIDHTGKYSGDSELQLERINVYYNEASGGRYVPRAVLMDLEPGTMDSVRSGPYGQIFRPDNFVFGQSGAGNNWAKGHYTEGAELIDSVLDVVRKEAENCDCLQGFQVCHSLGGGTGSGMGTLLISKIREEYPDRMMLTFSVFPSPKVSDTVVEPYNATLSVHQLVENADECMVLDNEALYDICFRTLKLATPTFGDLNHLISATMSGVTCCLRFPGQLNSDLRKLAVNLIPFPRLHFFMVGFAPLTSRGSQQYRALTVPELTQQMWDAKNMMCAADPRHGRYLTASAMFRGKMSTKEVDEQMINVQNKNSSYFVEWIPNNVKSSVCDIPPKGLKMASTFIGNSTSIQEMFRRVSEQFTAMFRRKAFLHWYTGEGMDEMEF</sequence>